<reference key="1">
    <citation type="journal article" date="2008" name="Appl. Environ. Microbiol.">
        <title>Genome of the epsilonproteobacterial chemolithoautotroph Sulfurimonas denitrificans.</title>
        <authorList>
            <person name="Sievert S.M."/>
            <person name="Scott K.M."/>
            <person name="Klotz M.G."/>
            <person name="Chain P.S.G."/>
            <person name="Hauser L.J."/>
            <person name="Hemp J."/>
            <person name="Huegler M."/>
            <person name="Land M."/>
            <person name="Lapidus A."/>
            <person name="Larimer F.W."/>
            <person name="Lucas S."/>
            <person name="Malfatti S.A."/>
            <person name="Meyer F."/>
            <person name="Paulsen I.T."/>
            <person name="Ren Q."/>
            <person name="Simon J."/>
            <person name="Bailey K."/>
            <person name="Diaz E."/>
            <person name="Fitzpatrick K.A."/>
            <person name="Glover B."/>
            <person name="Gwatney N."/>
            <person name="Korajkic A."/>
            <person name="Long A."/>
            <person name="Mobberley J.M."/>
            <person name="Pantry S.N."/>
            <person name="Pazder G."/>
            <person name="Peterson S."/>
            <person name="Quintanilla J.D."/>
            <person name="Sprinkle R."/>
            <person name="Stephens J."/>
            <person name="Thomas P."/>
            <person name="Vaughn R."/>
            <person name="Weber M.J."/>
            <person name="Wooten L.L."/>
        </authorList>
    </citation>
    <scope>NUCLEOTIDE SEQUENCE [LARGE SCALE GENOMIC DNA]</scope>
    <source>
        <strain>ATCC 33889 / DSM 1251</strain>
    </source>
</reference>
<dbReference type="EC" id="2.7.1.24" evidence="1"/>
<dbReference type="EMBL" id="CP000153">
    <property type="protein sequence ID" value="ABB45321.1"/>
    <property type="molecule type" value="Genomic_DNA"/>
</dbReference>
<dbReference type="RefSeq" id="WP_011373661.1">
    <property type="nucleotide sequence ID" value="NC_007575.1"/>
</dbReference>
<dbReference type="SMR" id="Q30NW0"/>
<dbReference type="STRING" id="326298.Suden_2047"/>
<dbReference type="KEGG" id="tdn:Suden_2047"/>
<dbReference type="eggNOG" id="COG0237">
    <property type="taxonomic scope" value="Bacteria"/>
</dbReference>
<dbReference type="HOGENOM" id="CLU_057180_0_0_7"/>
<dbReference type="OrthoDB" id="9812943at2"/>
<dbReference type="UniPathway" id="UPA00241">
    <property type="reaction ID" value="UER00356"/>
</dbReference>
<dbReference type="Proteomes" id="UP000002714">
    <property type="component" value="Chromosome"/>
</dbReference>
<dbReference type="GO" id="GO:0005737">
    <property type="term" value="C:cytoplasm"/>
    <property type="evidence" value="ECO:0007669"/>
    <property type="project" value="UniProtKB-SubCell"/>
</dbReference>
<dbReference type="GO" id="GO:0005524">
    <property type="term" value="F:ATP binding"/>
    <property type="evidence" value="ECO:0007669"/>
    <property type="project" value="UniProtKB-UniRule"/>
</dbReference>
<dbReference type="GO" id="GO:0004140">
    <property type="term" value="F:dephospho-CoA kinase activity"/>
    <property type="evidence" value="ECO:0007669"/>
    <property type="project" value="UniProtKB-UniRule"/>
</dbReference>
<dbReference type="GO" id="GO:0015937">
    <property type="term" value="P:coenzyme A biosynthetic process"/>
    <property type="evidence" value="ECO:0007669"/>
    <property type="project" value="UniProtKB-UniRule"/>
</dbReference>
<dbReference type="CDD" id="cd02022">
    <property type="entry name" value="DPCK"/>
    <property type="match status" value="1"/>
</dbReference>
<dbReference type="Gene3D" id="3.40.50.300">
    <property type="entry name" value="P-loop containing nucleotide triphosphate hydrolases"/>
    <property type="match status" value="1"/>
</dbReference>
<dbReference type="HAMAP" id="MF_00376">
    <property type="entry name" value="Dephospho_CoA_kinase"/>
    <property type="match status" value="1"/>
</dbReference>
<dbReference type="InterPro" id="IPR001977">
    <property type="entry name" value="Depp_CoAkinase"/>
</dbReference>
<dbReference type="InterPro" id="IPR027417">
    <property type="entry name" value="P-loop_NTPase"/>
</dbReference>
<dbReference type="NCBIfam" id="TIGR00152">
    <property type="entry name" value="dephospho-CoA kinase"/>
    <property type="match status" value="1"/>
</dbReference>
<dbReference type="PANTHER" id="PTHR10695:SF46">
    <property type="entry name" value="BIFUNCTIONAL COENZYME A SYNTHASE-RELATED"/>
    <property type="match status" value="1"/>
</dbReference>
<dbReference type="PANTHER" id="PTHR10695">
    <property type="entry name" value="DEPHOSPHO-COA KINASE-RELATED"/>
    <property type="match status" value="1"/>
</dbReference>
<dbReference type="Pfam" id="PF01121">
    <property type="entry name" value="CoaE"/>
    <property type="match status" value="1"/>
</dbReference>
<dbReference type="SUPFAM" id="SSF52540">
    <property type="entry name" value="P-loop containing nucleoside triphosphate hydrolases"/>
    <property type="match status" value="1"/>
</dbReference>
<dbReference type="PROSITE" id="PS51219">
    <property type="entry name" value="DPCK"/>
    <property type="match status" value="1"/>
</dbReference>
<gene>
    <name evidence="1" type="primary">coaE</name>
    <name type="ordered locus">Suden_2047</name>
</gene>
<feature type="chain" id="PRO_0000243361" description="Dephospho-CoA kinase">
    <location>
        <begin position="1"/>
        <end position="200"/>
    </location>
</feature>
<feature type="domain" description="DPCK" evidence="1">
    <location>
        <begin position="6"/>
        <end position="200"/>
    </location>
</feature>
<feature type="binding site" evidence="1">
    <location>
        <begin position="14"/>
        <end position="19"/>
    </location>
    <ligand>
        <name>ATP</name>
        <dbReference type="ChEBI" id="CHEBI:30616"/>
    </ligand>
</feature>
<proteinExistence type="inferred from homology"/>
<comment type="function">
    <text evidence="1">Catalyzes the phosphorylation of the 3'-hydroxyl group of dephosphocoenzyme A to form coenzyme A.</text>
</comment>
<comment type="catalytic activity">
    <reaction evidence="1">
        <text>3'-dephospho-CoA + ATP = ADP + CoA + H(+)</text>
        <dbReference type="Rhea" id="RHEA:18245"/>
        <dbReference type="ChEBI" id="CHEBI:15378"/>
        <dbReference type="ChEBI" id="CHEBI:30616"/>
        <dbReference type="ChEBI" id="CHEBI:57287"/>
        <dbReference type="ChEBI" id="CHEBI:57328"/>
        <dbReference type="ChEBI" id="CHEBI:456216"/>
        <dbReference type="EC" id="2.7.1.24"/>
    </reaction>
</comment>
<comment type="pathway">
    <text evidence="1">Cofactor biosynthesis; coenzyme A biosynthesis; CoA from (R)-pantothenate: step 5/5.</text>
</comment>
<comment type="subcellular location">
    <subcellularLocation>
        <location evidence="1">Cytoplasm</location>
    </subcellularLocation>
</comment>
<comment type="similarity">
    <text evidence="1">Belongs to the CoaE family.</text>
</comment>
<organism>
    <name type="scientific">Sulfurimonas denitrificans (strain ATCC 33889 / DSM 1251)</name>
    <name type="common">Thiomicrospira denitrificans (strain ATCC 33889 / DSM 1251)</name>
    <dbReference type="NCBI Taxonomy" id="326298"/>
    <lineage>
        <taxon>Bacteria</taxon>
        <taxon>Pseudomonadati</taxon>
        <taxon>Campylobacterota</taxon>
        <taxon>Epsilonproteobacteria</taxon>
        <taxon>Campylobacterales</taxon>
        <taxon>Sulfurimonadaceae</taxon>
        <taxon>Sulfurimonas</taxon>
    </lineage>
</organism>
<evidence type="ECO:0000255" key="1">
    <source>
        <dbReference type="HAMAP-Rule" id="MF_00376"/>
    </source>
</evidence>
<accession>Q30NW0</accession>
<keyword id="KW-0067">ATP-binding</keyword>
<keyword id="KW-0173">Coenzyme A biosynthesis</keyword>
<keyword id="KW-0963">Cytoplasm</keyword>
<keyword id="KW-0418">Kinase</keyword>
<keyword id="KW-0547">Nucleotide-binding</keyword>
<keyword id="KW-1185">Reference proteome</keyword>
<keyword id="KW-0808">Transferase</keyword>
<sequence length="200" mass="22929">MAFKYAIALSGGIATGKSTVASLLSLNGMRVIDADAISHDILDASSLWVRENFGDEFVDGVSVNRSKLGTLIFSDNIAKKKLESFLHPKIRAEIEQRSIKQDSFMFPYLIDIPLFFESGAYDIKESVVVYVPKELQLERFIKRNGFSREESLRRIESQMDIEEKKKRATWVIDNSGDLKHLQRECEEFVEKIKAKYLEKK</sequence>
<protein>
    <recommendedName>
        <fullName evidence="1">Dephospho-CoA kinase</fullName>
        <ecNumber evidence="1">2.7.1.24</ecNumber>
    </recommendedName>
    <alternativeName>
        <fullName evidence="1">Dephosphocoenzyme A kinase</fullName>
    </alternativeName>
</protein>
<name>COAE_SULDN</name>